<reference key="1">
    <citation type="submission" date="2006-09" db="EMBL/GenBank/DDBJ databases">
        <authorList>
            <consortium name="The Klebsiella pneumonia Genome Sequencing Project"/>
            <person name="McClelland M."/>
            <person name="Sanderson E.K."/>
            <person name="Spieth J."/>
            <person name="Clifton W.S."/>
            <person name="Latreille P."/>
            <person name="Sabo A."/>
            <person name="Pepin K."/>
            <person name="Bhonagiri V."/>
            <person name="Porwollik S."/>
            <person name="Ali J."/>
            <person name="Wilson R.K."/>
        </authorList>
    </citation>
    <scope>NUCLEOTIDE SEQUENCE [LARGE SCALE GENOMIC DNA]</scope>
    <source>
        <strain>ATCC 700721 / MGH 78578</strain>
    </source>
</reference>
<feature type="chain" id="PRO_0000357374" description="Enolase-phosphatase E1">
    <location>
        <begin position="1"/>
        <end position="229"/>
    </location>
</feature>
<feature type="region of interest" description="Disordered" evidence="2">
    <location>
        <begin position="207"/>
        <end position="229"/>
    </location>
</feature>
<feature type="compositionally biased region" description="Basic and acidic residues" evidence="2">
    <location>
        <begin position="218"/>
        <end position="229"/>
    </location>
</feature>
<name>MTNC_KLEP7</name>
<proteinExistence type="inferred from homology"/>
<protein>
    <recommendedName>
        <fullName evidence="1">Enolase-phosphatase E1</fullName>
        <ecNumber evidence="1">3.1.3.77</ecNumber>
    </recommendedName>
    <alternativeName>
        <fullName evidence="1">2,3-diketo-5-methylthio-1-phosphopentane phosphatase</fullName>
    </alternativeName>
</protein>
<keyword id="KW-0028">Amino-acid biosynthesis</keyword>
<keyword id="KW-0378">Hydrolase</keyword>
<keyword id="KW-0460">Magnesium</keyword>
<keyword id="KW-0479">Metal-binding</keyword>
<keyword id="KW-0486">Methionine biosynthesis</keyword>
<accession>A6T673</accession>
<dbReference type="EC" id="3.1.3.77" evidence="1"/>
<dbReference type="EMBL" id="CP000647">
    <property type="protein sequence ID" value="ABR76094.1"/>
    <property type="molecule type" value="Genomic_DNA"/>
</dbReference>
<dbReference type="RefSeq" id="WP_012068444.1">
    <property type="nucleotide sequence ID" value="NC_009648.1"/>
</dbReference>
<dbReference type="SMR" id="A6T673"/>
<dbReference type="STRING" id="272620.KPN_00644"/>
<dbReference type="PaxDb" id="272620-KPN_00644"/>
<dbReference type="EnsemblBacteria" id="ABR76094">
    <property type="protein sequence ID" value="ABR76094"/>
    <property type="gene ID" value="KPN_00644"/>
</dbReference>
<dbReference type="KEGG" id="kpn:KPN_00644"/>
<dbReference type="HOGENOM" id="CLU_023273_0_0_6"/>
<dbReference type="UniPathway" id="UPA00904">
    <property type="reaction ID" value="UER00876"/>
</dbReference>
<dbReference type="UniPathway" id="UPA00904">
    <property type="reaction ID" value="UER00877"/>
</dbReference>
<dbReference type="Proteomes" id="UP000000265">
    <property type="component" value="Chromosome"/>
</dbReference>
<dbReference type="GO" id="GO:0043715">
    <property type="term" value="F:2,3-diketo-5-methylthiopentyl-1-phosphate enolase activity"/>
    <property type="evidence" value="ECO:0007669"/>
    <property type="project" value="UniProtKB-UniRule"/>
</dbReference>
<dbReference type="GO" id="GO:0043716">
    <property type="term" value="F:2-hydroxy-3-keto-5-methylthiopentenyl-1-phosphate phosphatase activity"/>
    <property type="evidence" value="ECO:0007669"/>
    <property type="project" value="UniProtKB-UniRule"/>
</dbReference>
<dbReference type="GO" id="GO:0043874">
    <property type="term" value="F:acireductone synthase activity"/>
    <property type="evidence" value="ECO:0007669"/>
    <property type="project" value="UniProtKB-EC"/>
</dbReference>
<dbReference type="GO" id="GO:0000287">
    <property type="term" value="F:magnesium ion binding"/>
    <property type="evidence" value="ECO:0007669"/>
    <property type="project" value="UniProtKB-UniRule"/>
</dbReference>
<dbReference type="GO" id="GO:0019509">
    <property type="term" value="P:L-methionine salvage from methylthioadenosine"/>
    <property type="evidence" value="ECO:0007669"/>
    <property type="project" value="UniProtKB-UniRule"/>
</dbReference>
<dbReference type="CDD" id="cd01629">
    <property type="entry name" value="HAD_EP"/>
    <property type="match status" value="1"/>
</dbReference>
<dbReference type="FunFam" id="3.40.50.1000:FF:000079">
    <property type="entry name" value="Enolase-phosphatase E1"/>
    <property type="match status" value="1"/>
</dbReference>
<dbReference type="Gene3D" id="1.10.720.60">
    <property type="match status" value="1"/>
</dbReference>
<dbReference type="Gene3D" id="3.40.50.1000">
    <property type="entry name" value="HAD superfamily/HAD-like"/>
    <property type="match status" value="1"/>
</dbReference>
<dbReference type="HAMAP" id="MF_01681">
    <property type="entry name" value="Salvage_MtnC"/>
    <property type="match status" value="1"/>
</dbReference>
<dbReference type="InterPro" id="IPR023943">
    <property type="entry name" value="Enolase-ppase_E1"/>
</dbReference>
<dbReference type="InterPro" id="IPR036412">
    <property type="entry name" value="HAD-like_sf"/>
</dbReference>
<dbReference type="InterPro" id="IPR006439">
    <property type="entry name" value="HAD-SF_hydro_IA"/>
</dbReference>
<dbReference type="InterPro" id="IPR023214">
    <property type="entry name" value="HAD_sf"/>
</dbReference>
<dbReference type="NCBIfam" id="TIGR01691">
    <property type="entry name" value="enolase-ppase"/>
    <property type="match status" value="1"/>
</dbReference>
<dbReference type="NCBIfam" id="TIGR01549">
    <property type="entry name" value="HAD-SF-IA-v1"/>
    <property type="match status" value="1"/>
</dbReference>
<dbReference type="PANTHER" id="PTHR20371">
    <property type="entry name" value="ENOLASE-PHOSPHATASE E1"/>
    <property type="match status" value="1"/>
</dbReference>
<dbReference type="PANTHER" id="PTHR20371:SF1">
    <property type="entry name" value="ENOLASE-PHOSPHATASE E1"/>
    <property type="match status" value="1"/>
</dbReference>
<dbReference type="Pfam" id="PF00702">
    <property type="entry name" value="Hydrolase"/>
    <property type="match status" value="1"/>
</dbReference>
<dbReference type="PRINTS" id="PR00413">
    <property type="entry name" value="HADHALOGNASE"/>
</dbReference>
<dbReference type="SFLD" id="SFLDG01133">
    <property type="entry name" value="C1.5.4:_Enolase-phosphatase_Li"/>
    <property type="match status" value="1"/>
</dbReference>
<dbReference type="SFLD" id="SFLDF00044">
    <property type="entry name" value="enolase-phosphatase"/>
    <property type="match status" value="1"/>
</dbReference>
<dbReference type="SUPFAM" id="SSF56784">
    <property type="entry name" value="HAD-like"/>
    <property type="match status" value="1"/>
</dbReference>
<evidence type="ECO:0000255" key="1">
    <source>
        <dbReference type="HAMAP-Rule" id="MF_01681"/>
    </source>
</evidence>
<evidence type="ECO:0000256" key="2">
    <source>
        <dbReference type="SAM" id="MobiDB-lite"/>
    </source>
</evidence>
<gene>
    <name evidence="1" type="primary">mtnC</name>
    <name type="ordered locus">KPN78578_06330</name>
    <name type="ORF">KPN_00644</name>
</gene>
<sequence>MIRAIVTDIEGTTSDIRFVHNVLFPYARERLAGFVTAQQHAEPVKTILDNLRRETDAPAASTADLITTLFAFMDEDRKSTALKALQGIIWRDGYLNGDFTGHLYPDVLPALEQWKAQGIDLYVYSSGSVAAQKLLFGYSDEGDITHLFTGYFDTLVGAKREVQSYRNIAEHLGHAPGTILFLSDIHQELDAAEAAGLRTIQLVRGDRDPASHHPQVQRFDDIHPEQIPA</sequence>
<comment type="function">
    <text evidence="1">Bifunctional enzyme that catalyzes the enolization of 2,3-diketo-5-methylthiopentyl-1-phosphate (DK-MTP-1-P) into the intermediate 2-hydroxy-3-keto-5-methylthiopentenyl-1-phosphate (HK-MTPenyl-1-P), which is then dephosphorylated to form the acireductone 1,2-dihydroxy-3-keto-5-methylthiopentene (DHK-MTPene).</text>
</comment>
<comment type="catalytic activity">
    <reaction evidence="1">
        <text>5-methylsulfanyl-2,3-dioxopentyl phosphate + H2O = 1,2-dihydroxy-5-(methylsulfanyl)pent-1-en-3-one + phosphate</text>
        <dbReference type="Rhea" id="RHEA:21700"/>
        <dbReference type="ChEBI" id="CHEBI:15377"/>
        <dbReference type="ChEBI" id="CHEBI:43474"/>
        <dbReference type="ChEBI" id="CHEBI:49252"/>
        <dbReference type="ChEBI" id="CHEBI:58828"/>
        <dbReference type="EC" id="3.1.3.77"/>
    </reaction>
</comment>
<comment type="cofactor">
    <cofactor evidence="1">
        <name>Mg(2+)</name>
        <dbReference type="ChEBI" id="CHEBI:18420"/>
    </cofactor>
    <text evidence="1">Binds 1 Mg(2+) ion per subunit.</text>
</comment>
<comment type="pathway">
    <text evidence="1">Amino-acid biosynthesis; L-methionine biosynthesis via salvage pathway; L-methionine from S-methyl-5-thio-alpha-D-ribose 1-phosphate: step 3/6.</text>
</comment>
<comment type="pathway">
    <text evidence="1">Amino-acid biosynthesis; L-methionine biosynthesis via salvage pathway; L-methionine from S-methyl-5-thio-alpha-D-ribose 1-phosphate: step 4/6.</text>
</comment>
<comment type="subunit">
    <text evidence="1">Monomer.</text>
</comment>
<comment type="similarity">
    <text evidence="1">Belongs to the HAD-like hydrolase superfamily. MasA/MtnC family.</text>
</comment>
<organism>
    <name type="scientific">Klebsiella pneumoniae subsp. pneumoniae (strain ATCC 700721 / MGH 78578)</name>
    <dbReference type="NCBI Taxonomy" id="272620"/>
    <lineage>
        <taxon>Bacteria</taxon>
        <taxon>Pseudomonadati</taxon>
        <taxon>Pseudomonadota</taxon>
        <taxon>Gammaproteobacteria</taxon>
        <taxon>Enterobacterales</taxon>
        <taxon>Enterobacteriaceae</taxon>
        <taxon>Klebsiella/Raoultella group</taxon>
        <taxon>Klebsiella</taxon>
        <taxon>Klebsiella pneumoniae complex</taxon>
    </lineage>
</organism>